<reference key="1">
    <citation type="journal article" date="2003" name="Proc. Natl. Acad. Sci. U.S.A.">
        <title>The complete genome sequence of Chromobacterium violaceum reveals remarkable and exploitable bacterial adaptability.</title>
        <authorList>
            <person name="Vasconcelos A.T.R."/>
            <person name="de Almeida D.F."/>
            <person name="Hungria M."/>
            <person name="Guimaraes C.T."/>
            <person name="Antonio R.V."/>
            <person name="Almeida F.C."/>
            <person name="de Almeida L.G.P."/>
            <person name="de Almeida R."/>
            <person name="Alves-Gomes J.A."/>
            <person name="Andrade E.M."/>
            <person name="Araripe J."/>
            <person name="de Araujo M.F.F."/>
            <person name="Astolfi-Filho S."/>
            <person name="Azevedo V."/>
            <person name="Baptista A.J."/>
            <person name="Bataus L.A.M."/>
            <person name="Batista J.S."/>
            <person name="Belo A."/>
            <person name="van den Berg C."/>
            <person name="Bogo M."/>
            <person name="Bonatto S."/>
            <person name="Bordignon J."/>
            <person name="Brigido M.M."/>
            <person name="Brito C.A."/>
            <person name="Brocchi M."/>
            <person name="Burity H.A."/>
            <person name="Camargo A.A."/>
            <person name="Cardoso D.D.P."/>
            <person name="Carneiro N.P."/>
            <person name="Carraro D.M."/>
            <person name="Carvalho C.M.B."/>
            <person name="Cascardo J.C.M."/>
            <person name="Cavada B.S."/>
            <person name="Chueire L.M.O."/>
            <person name="Creczynski-Pasa T.B."/>
            <person name="Cunha-Junior N.C."/>
            <person name="Fagundes N."/>
            <person name="Falcao C.L."/>
            <person name="Fantinatti F."/>
            <person name="Farias I.P."/>
            <person name="Felipe M.S.S."/>
            <person name="Ferrari L.P."/>
            <person name="Ferro J.A."/>
            <person name="Ferro M.I.T."/>
            <person name="Franco G.R."/>
            <person name="Freitas N.S.A."/>
            <person name="Furlan L.R."/>
            <person name="Gazzinelli R.T."/>
            <person name="Gomes E.A."/>
            <person name="Goncalves P.R."/>
            <person name="Grangeiro T.B."/>
            <person name="Grattapaglia D."/>
            <person name="Grisard E.C."/>
            <person name="Hanna E.S."/>
            <person name="Jardim S.N."/>
            <person name="Laurino J."/>
            <person name="Leoi L.C.T."/>
            <person name="Lima L.F.A."/>
            <person name="Loureiro M.F."/>
            <person name="Lyra M.C.C.P."/>
            <person name="Madeira H.M.F."/>
            <person name="Manfio G.P."/>
            <person name="Maranhao A.Q."/>
            <person name="Martins W.S."/>
            <person name="di Mauro S.M.Z."/>
            <person name="de Medeiros S.R.B."/>
            <person name="Meissner R.V."/>
            <person name="Moreira M.A.M."/>
            <person name="Nascimento F.F."/>
            <person name="Nicolas M.F."/>
            <person name="Oliveira J.G."/>
            <person name="Oliveira S.C."/>
            <person name="Paixao R.F.C."/>
            <person name="Parente J.A."/>
            <person name="Pedrosa F.O."/>
            <person name="Pena S.D.J."/>
            <person name="Pereira J.O."/>
            <person name="Pereira M."/>
            <person name="Pinto L.S.R.C."/>
            <person name="Pinto L.S."/>
            <person name="Porto J.I.R."/>
            <person name="Potrich D.P."/>
            <person name="Ramalho-Neto C.E."/>
            <person name="Reis A.M.M."/>
            <person name="Rigo L.U."/>
            <person name="Rondinelli E."/>
            <person name="Santos E.B.P."/>
            <person name="Santos F.R."/>
            <person name="Schneider M.P.C."/>
            <person name="Seuanez H.N."/>
            <person name="Silva A.M.R."/>
            <person name="da Silva A.L.C."/>
            <person name="Silva D.W."/>
            <person name="Silva R."/>
            <person name="Simoes I.C."/>
            <person name="Simon D."/>
            <person name="Soares C.M.A."/>
            <person name="Soares R.B.A."/>
            <person name="Souza E.M."/>
            <person name="Souza K.R.L."/>
            <person name="Souza R.C."/>
            <person name="Steffens M.B.R."/>
            <person name="Steindel M."/>
            <person name="Teixeira S.R."/>
            <person name="Urmenyi T."/>
            <person name="Vettore A."/>
            <person name="Wassem R."/>
            <person name="Zaha A."/>
            <person name="Simpson A.J.G."/>
        </authorList>
    </citation>
    <scope>NUCLEOTIDE SEQUENCE [LARGE SCALE GENOMIC DNA]</scope>
    <source>
        <strain>ATCC 12472 / DSM 30191 / JCM 1249 / CCUG 213 / NBRC 12614 / NCIMB 9131 / NCTC 9757 / MK</strain>
    </source>
</reference>
<gene>
    <name evidence="1" type="primary">clpX</name>
    <name type="ordered locus">CV_2557</name>
</gene>
<evidence type="ECO:0000255" key="1">
    <source>
        <dbReference type="HAMAP-Rule" id="MF_00175"/>
    </source>
</evidence>
<evidence type="ECO:0000255" key="2">
    <source>
        <dbReference type="PROSITE-ProRule" id="PRU01250"/>
    </source>
</evidence>
<protein>
    <recommendedName>
        <fullName evidence="1">ATP-dependent Clp protease ATP-binding subunit ClpX</fullName>
    </recommendedName>
</protein>
<proteinExistence type="inferred from homology"/>
<comment type="function">
    <text evidence="1">ATP-dependent specificity component of the Clp protease. It directs the protease to specific substrates. Can perform chaperone functions in the absence of ClpP.</text>
</comment>
<comment type="subunit">
    <text evidence="1">Component of the ClpX-ClpP complex. Forms a hexameric ring that, in the presence of ATP, binds to fourteen ClpP subunits assembled into a disk-like structure with a central cavity, resembling the structure of eukaryotic proteasomes.</text>
</comment>
<comment type="similarity">
    <text evidence="1">Belongs to the ClpX chaperone family.</text>
</comment>
<accession>Q7NUZ0</accession>
<sequence>MADKNSNEKLLYCSFCGKSQHEVQRLIAGPQVFICNECVELCNDIIREELEKGTGGEVIGGASADHPLPTPQEIRADLDQYIIGQDFAKKTLSVAVYNHYKRLYNKGGKDDVELAKSNILLIGPTGSGKTLLAQSLARLLDVPFVIADATTLTEAGYVGEDVEHIIQKLLQKCDYDVDKAQRGIVYIDEIDKISRKSENPSITRDVSGEGVQQALLKLIEGTVASVPPQGGRKHPNQEFIQVDTTNILFICGGAFDGLDKIIRQRSEKGGIGFGAEVSSKDDGKSLTKLFQEVEPQDIIRFGLIPELIGRLPVVATLEELDEEALVSILTQPKNALIKQYQKLFSLETVELEVRPSALRVIAKQALARKTGARGLRSILERALLDTMYELPSMQDVEKVVVDEKVIEKGDKPLFIYREGGGVAQSA</sequence>
<name>CLPX_CHRVO</name>
<keyword id="KW-0067">ATP-binding</keyword>
<keyword id="KW-0143">Chaperone</keyword>
<keyword id="KW-0479">Metal-binding</keyword>
<keyword id="KW-0547">Nucleotide-binding</keyword>
<keyword id="KW-1185">Reference proteome</keyword>
<keyword id="KW-0862">Zinc</keyword>
<feature type="chain" id="PRO_0000160341" description="ATP-dependent Clp protease ATP-binding subunit ClpX">
    <location>
        <begin position="1"/>
        <end position="426"/>
    </location>
</feature>
<feature type="domain" description="ClpX-type ZB" evidence="2">
    <location>
        <begin position="1"/>
        <end position="54"/>
    </location>
</feature>
<feature type="binding site" evidence="2">
    <location>
        <position position="13"/>
    </location>
    <ligand>
        <name>Zn(2+)</name>
        <dbReference type="ChEBI" id="CHEBI:29105"/>
    </ligand>
</feature>
<feature type="binding site" evidence="2">
    <location>
        <position position="16"/>
    </location>
    <ligand>
        <name>Zn(2+)</name>
        <dbReference type="ChEBI" id="CHEBI:29105"/>
    </ligand>
</feature>
<feature type="binding site" evidence="2">
    <location>
        <position position="35"/>
    </location>
    <ligand>
        <name>Zn(2+)</name>
        <dbReference type="ChEBI" id="CHEBI:29105"/>
    </ligand>
</feature>
<feature type="binding site" evidence="2">
    <location>
        <position position="38"/>
    </location>
    <ligand>
        <name>Zn(2+)</name>
        <dbReference type="ChEBI" id="CHEBI:29105"/>
    </ligand>
</feature>
<feature type="binding site" evidence="1">
    <location>
        <begin position="124"/>
        <end position="131"/>
    </location>
    <ligand>
        <name>ATP</name>
        <dbReference type="ChEBI" id="CHEBI:30616"/>
    </ligand>
</feature>
<organism>
    <name type="scientific">Chromobacterium violaceum (strain ATCC 12472 / DSM 30191 / JCM 1249 / CCUG 213 / NBRC 12614 / NCIMB 9131 / NCTC 9757 / MK)</name>
    <dbReference type="NCBI Taxonomy" id="243365"/>
    <lineage>
        <taxon>Bacteria</taxon>
        <taxon>Pseudomonadati</taxon>
        <taxon>Pseudomonadota</taxon>
        <taxon>Betaproteobacteria</taxon>
        <taxon>Neisseriales</taxon>
        <taxon>Chromobacteriaceae</taxon>
        <taxon>Chromobacterium</taxon>
    </lineage>
</organism>
<dbReference type="EMBL" id="AE016825">
    <property type="protein sequence ID" value="AAQ60227.1"/>
    <property type="molecule type" value="Genomic_DNA"/>
</dbReference>
<dbReference type="RefSeq" id="WP_011136104.1">
    <property type="nucleotide sequence ID" value="NC_005085.1"/>
</dbReference>
<dbReference type="SMR" id="Q7NUZ0"/>
<dbReference type="STRING" id="243365.CV_2557"/>
<dbReference type="GeneID" id="66368307"/>
<dbReference type="KEGG" id="cvi:CV_2557"/>
<dbReference type="eggNOG" id="COG1219">
    <property type="taxonomic scope" value="Bacteria"/>
</dbReference>
<dbReference type="HOGENOM" id="CLU_014218_8_2_4"/>
<dbReference type="OrthoDB" id="9804062at2"/>
<dbReference type="Proteomes" id="UP000001424">
    <property type="component" value="Chromosome"/>
</dbReference>
<dbReference type="GO" id="GO:0009376">
    <property type="term" value="C:HslUV protease complex"/>
    <property type="evidence" value="ECO:0007669"/>
    <property type="project" value="TreeGrafter"/>
</dbReference>
<dbReference type="GO" id="GO:0005524">
    <property type="term" value="F:ATP binding"/>
    <property type="evidence" value="ECO:0007669"/>
    <property type="project" value="UniProtKB-UniRule"/>
</dbReference>
<dbReference type="GO" id="GO:0016887">
    <property type="term" value="F:ATP hydrolysis activity"/>
    <property type="evidence" value="ECO:0007669"/>
    <property type="project" value="InterPro"/>
</dbReference>
<dbReference type="GO" id="GO:0140662">
    <property type="term" value="F:ATP-dependent protein folding chaperone"/>
    <property type="evidence" value="ECO:0007669"/>
    <property type="project" value="InterPro"/>
</dbReference>
<dbReference type="GO" id="GO:0046983">
    <property type="term" value="F:protein dimerization activity"/>
    <property type="evidence" value="ECO:0007669"/>
    <property type="project" value="InterPro"/>
</dbReference>
<dbReference type="GO" id="GO:0051082">
    <property type="term" value="F:unfolded protein binding"/>
    <property type="evidence" value="ECO:0007669"/>
    <property type="project" value="UniProtKB-UniRule"/>
</dbReference>
<dbReference type="GO" id="GO:0008270">
    <property type="term" value="F:zinc ion binding"/>
    <property type="evidence" value="ECO:0007669"/>
    <property type="project" value="InterPro"/>
</dbReference>
<dbReference type="GO" id="GO:0051301">
    <property type="term" value="P:cell division"/>
    <property type="evidence" value="ECO:0007669"/>
    <property type="project" value="TreeGrafter"/>
</dbReference>
<dbReference type="GO" id="GO:0051603">
    <property type="term" value="P:proteolysis involved in protein catabolic process"/>
    <property type="evidence" value="ECO:0007669"/>
    <property type="project" value="TreeGrafter"/>
</dbReference>
<dbReference type="CDD" id="cd19497">
    <property type="entry name" value="RecA-like_ClpX"/>
    <property type="match status" value="1"/>
</dbReference>
<dbReference type="FunFam" id="1.10.8.60:FF:000002">
    <property type="entry name" value="ATP-dependent Clp protease ATP-binding subunit ClpX"/>
    <property type="match status" value="1"/>
</dbReference>
<dbReference type="FunFam" id="3.40.50.300:FF:000005">
    <property type="entry name" value="ATP-dependent Clp protease ATP-binding subunit ClpX"/>
    <property type="match status" value="1"/>
</dbReference>
<dbReference type="Gene3D" id="1.10.8.60">
    <property type="match status" value="1"/>
</dbReference>
<dbReference type="Gene3D" id="6.20.220.10">
    <property type="entry name" value="ClpX chaperone, C4-type zinc finger domain"/>
    <property type="match status" value="1"/>
</dbReference>
<dbReference type="Gene3D" id="3.40.50.300">
    <property type="entry name" value="P-loop containing nucleotide triphosphate hydrolases"/>
    <property type="match status" value="1"/>
</dbReference>
<dbReference type="HAMAP" id="MF_00175">
    <property type="entry name" value="ClpX"/>
    <property type="match status" value="1"/>
</dbReference>
<dbReference type="InterPro" id="IPR003593">
    <property type="entry name" value="AAA+_ATPase"/>
</dbReference>
<dbReference type="InterPro" id="IPR050052">
    <property type="entry name" value="ATP-dep_Clp_protease_ClpX"/>
</dbReference>
<dbReference type="InterPro" id="IPR003959">
    <property type="entry name" value="ATPase_AAA_core"/>
</dbReference>
<dbReference type="InterPro" id="IPR019489">
    <property type="entry name" value="Clp_ATPase_C"/>
</dbReference>
<dbReference type="InterPro" id="IPR004487">
    <property type="entry name" value="Clp_protease_ATP-bd_su_ClpX"/>
</dbReference>
<dbReference type="InterPro" id="IPR046425">
    <property type="entry name" value="ClpX_bact"/>
</dbReference>
<dbReference type="InterPro" id="IPR027417">
    <property type="entry name" value="P-loop_NTPase"/>
</dbReference>
<dbReference type="InterPro" id="IPR010603">
    <property type="entry name" value="Znf_CppX_C4"/>
</dbReference>
<dbReference type="InterPro" id="IPR038366">
    <property type="entry name" value="Znf_CppX_C4_sf"/>
</dbReference>
<dbReference type="NCBIfam" id="TIGR00382">
    <property type="entry name" value="clpX"/>
    <property type="match status" value="1"/>
</dbReference>
<dbReference type="NCBIfam" id="NF003745">
    <property type="entry name" value="PRK05342.1"/>
    <property type="match status" value="1"/>
</dbReference>
<dbReference type="PANTHER" id="PTHR48102:SF7">
    <property type="entry name" value="ATP-DEPENDENT CLP PROTEASE ATP-BINDING SUBUNIT CLPX-LIKE, MITOCHONDRIAL"/>
    <property type="match status" value="1"/>
</dbReference>
<dbReference type="PANTHER" id="PTHR48102">
    <property type="entry name" value="ATP-DEPENDENT CLP PROTEASE ATP-BINDING SUBUNIT CLPX-LIKE, MITOCHONDRIAL-RELATED"/>
    <property type="match status" value="1"/>
</dbReference>
<dbReference type="Pfam" id="PF07724">
    <property type="entry name" value="AAA_2"/>
    <property type="match status" value="1"/>
</dbReference>
<dbReference type="Pfam" id="PF10431">
    <property type="entry name" value="ClpB_D2-small"/>
    <property type="match status" value="1"/>
</dbReference>
<dbReference type="Pfam" id="PF06689">
    <property type="entry name" value="zf-C4_ClpX"/>
    <property type="match status" value="1"/>
</dbReference>
<dbReference type="SMART" id="SM00382">
    <property type="entry name" value="AAA"/>
    <property type="match status" value="1"/>
</dbReference>
<dbReference type="SMART" id="SM01086">
    <property type="entry name" value="ClpB_D2-small"/>
    <property type="match status" value="1"/>
</dbReference>
<dbReference type="SMART" id="SM00994">
    <property type="entry name" value="zf-C4_ClpX"/>
    <property type="match status" value="1"/>
</dbReference>
<dbReference type="SUPFAM" id="SSF57716">
    <property type="entry name" value="Glucocorticoid receptor-like (DNA-binding domain)"/>
    <property type="match status" value="1"/>
</dbReference>
<dbReference type="SUPFAM" id="SSF52540">
    <property type="entry name" value="P-loop containing nucleoside triphosphate hydrolases"/>
    <property type="match status" value="1"/>
</dbReference>
<dbReference type="PROSITE" id="PS51902">
    <property type="entry name" value="CLPX_ZB"/>
    <property type="match status" value="1"/>
</dbReference>